<reference key="1">
    <citation type="journal article" date="2003" name="Science">
        <title>A genomic view of the human-Bacteroides thetaiotaomicron symbiosis.</title>
        <authorList>
            <person name="Xu J."/>
            <person name="Bjursell M.K."/>
            <person name="Himrod J."/>
            <person name="Deng S."/>
            <person name="Carmichael L.K."/>
            <person name="Chiang H.C."/>
            <person name="Hooper L.V."/>
            <person name="Gordon J.I."/>
        </authorList>
    </citation>
    <scope>NUCLEOTIDE SEQUENCE [LARGE SCALE GENOMIC DNA]</scope>
    <source>
        <strain>ATCC 29148 / DSM 2079 / JCM 5827 / CCUG 10774 / NCTC 10582 / VPI-5482 / E50</strain>
    </source>
</reference>
<proteinExistence type="inferred from homology"/>
<accession>Q89Z26</accession>
<keyword id="KW-0963">Cytoplasm</keyword>
<keyword id="KW-0342">GTP-binding</keyword>
<keyword id="KW-0378">Hydrolase</keyword>
<keyword id="KW-0460">Magnesium</keyword>
<keyword id="KW-0479">Metal-binding</keyword>
<keyword id="KW-0547">Nucleotide-binding</keyword>
<keyword id="KW-0630">Potassium</keyword>
<keyword id="KW-1185">Reference proteome</keyword>
<keyword id="KW-0819">tRNA processing</keyword>
<evidence type="ECO:0000255" key="1">
    <source>
        <dbReference type="HAMAP-Rule" id="MF_00379"/>
    </source>
</evidence>
<sequence length="465" mass="51612">MNQDTICAIATAQGGAIGSIRVSGPEAISITSRIFQPAKAGKLLSEQKPYTLTFGRIYNGEEVIDEVLVSLFRAPHSYTGEDSTEITCHGSSYILQQVMQLLIKNGCRMAQPGEYTQRAFLNGKMDLSQAEAVADLIASSSAATHRLAMSQMRGGFSKELTDLRSKLLNFTSMIELELDFSEEDVEFADRSALRKLADEIEQVISRLVHSFNVGNAIKNGVPVAIIGETNAGKSTLLNVLLNEDKAIVSDIHGTTRDVIEDTINIGGITFRFIDTAGIRETNDTIESLGIERTFQKLDQAEIVLWMVDSSDASSQIKQLSEKIIPRCEEKQLIVVFNKADLIEEMQKEELSALLKNFPKEYTKSIFISAKERRQTDELQKMLINAAHLPTVTQNDIIVTNVRHYEALSKALDAIHRVQDGLDSHISGDFLSQDIRECIFFISDIAGEVTNDMVLQNIFQHFCIGK</sequence>
<name>MNME_BACTN</name>
<feature type="chain" id="PRO_0000188851" description="tRNA modification GTPase MnmE">
    <location>
        <begin position="1"/>
        <end position="465"/>
    </location>
</feature>
<feature type="domain" description="TrmE-type G">
    <location>
        <begin position="220"/>
        <end position="387"/>
    </location>
</feature>
<feature type="binding site" evidence="1">
    <location>
        <position position="21"/>
    </location>
    <ligand>
        <name>(6S)-5-formyl-5,6,7,8-tetrahydrofolate</name>
        <dbReference type="ChEBI" id="CHEBI:57457"/>
    </ligand>
</feature>
<feature type="binding site" evidence="1">
    <location>
        <position position="85"/>
    </location>
    <ligand>
        <name>(6S)-5-formyl-5,6,7,8-tetrahydrofolate</name>
        <dbReference type="ChEBI" id="CHEBI:57457"/>
    </ligand>
</feature>
<feature type="binding site" evidence="1">
    <location>
        <position position="124"/>
    </location>
    <ligand>
        <name>(6S)-5-formyl-5,6,7,8-tetrahydrofolate</name>
        <dbReference type="ChEBI" id="CHEBI:57457"/>
    </ligand>
</feature>
<feature type="binding site" evidence="1">
    <location>
        <begin position="230"/>
        <end position="235"/>
    </location>
    <ligand>
        <name>GTP</name>
        <dbReference type="ChEBI" id="CHEBI:37565"/>
    </ligand>
</feature>
<feature type="binding site" evidence="1">
    <location>
        <position position="230"/>
    </location>
    <ligand>
        <name>K(+)</name>
        <dbReference type="ChEBI" id="CHEBI:29103"/>
    </ligand>
</feature>
<feature type="binding site" evidence="1">
    <location>
        <position position="234"/>
    </location>
    <ligand>
        <name>Mg(2+)</name>
        <dbReference type="ChEBI" id="CHEBI:18420"/>
    </ligand>
</feature>
<feature type="binding site" evidence="1">
    <location>
        <begin position="249"/>
        <end position="255"/>
    </location>
    <ligand>
        <name>GTP</name>
        <dbReference type="ChEBI" id="CHEBI:37565"/>
    </ligand>
</feature>
<feature type="binding site" evidence="1">
    <location>
        <position position="249"/>
    </location>
    <ligand>
        <name>K(+)</name>
        <dbReference type="ChEBI" id="CHEBI:29103"/>
    </ligand>
</feature>
<feature type="binding site" evidence="1">
    <location>
        <position position="251"/>
    </location>
    <ligand>
        <name>K(+)</name>
        <dbReference type="ChEBI" id="CHEBI:29103"/>
    </ligand>
</feature>
<feature type="binding site" evidence="1">
    <location>
        <position position="254"/>
    </location>
    <ligand>
        <name>K(+)</name>
        <dbReference type="ChEBI" id="CHEBI:29103"/>
    </ligand>
</feature>
<feature type="binding site" evidence="1">
    <location>
        <position position="255"/>
    </location>
    <ligand>
        <name>Mg(2+)</name>
        <dbReference type="ChEBI" id="CHEBI:18420"/>
    </ligand>
</feature>
<feature type="binding site" evidence="1">
    <location>
        <begin position="274"/>
        <end position="277"/>
    </location>
    <ligand>
        <name>GTP</name>
        <dbReference type="ChEBI" id="CHEBI:37565"/>
    </ligand>
</feature>
<feature type="binding site" evidence="1">
    <location>
        <begin position="337"/>
        <end position="340"/>
    </location>
    <ligand>
        <name>GTP</name>
        <dbReference type="ChEBI" id="CHEBI:37565"/>
    </ligand>
</feature>
<feature type="binding site" evidence="1">
    <location>
        <position position="465"/>
    </location>
    <ligand>
        <name>(6S)-5-formyl-5,6,7,8-tetrahydrofolate</name>
        <dbReference type="ChEBI" id="CHEBI:57457"/>
    </ligand>
</feature>
<protein>
    <recommendedName>
        <fullName evidence="1">tRNA modification GTPase MnmE</fullName>
        <ecNumber evidence="1">3.6.-.-</ecNumber>
    </recommendedName>
</protein>
<organism>
    <name type="scientific">Bacteroides thetaiotaomicron (strain ATCC 29148 / DSM 2079 / JCM 5827 / CCUG 10774 / NCTC 10582 / VPI-5482 / E50)</name>
    <dbReference type="NCBI Taxonomy" id="226186"/>
    <lineage>
        <taxon>Bacteria</taxon>
        <taxon>Pseudomonadati</taxon>
        <taxon>Bacteroidota</taxon>
        <taxon>Bacteroidia</taxon>
        <taxon>Bacteroidales</taxon>
        <taxon>Bacteroidaceae</taxon>
        <taxon>Bacteroides</taxon>
    </lineage>
</organism>
<dbReference type="EC" id="3.6.-.-" evidence="1"/>
<dbReference type="EMBL" id="AE015928">
    <property type="protein sequence ID" value="AAO79656.1"/>
    <property type="molecule type" value="Genomic_DNA"/>
</dbReference>
<dbReference type="RefSeq" id="NP_813462.1">
    <property type="nucleotide sequence ID" value="NC_004663.1"/>
</dbReference>
<dbReference type="RefSeq" id="WP_011109330.1">
    <property type="nucleotide sequence ID" value="NC_004663.1"/>
</dbReference>
<dbReference type="SMR" id="Q89Z26"/>
<dbReference type="FunCoup" id="Q89Z26">
    <property type="interactions" value="548"/>
</dbReference>
<dbReference type="STRING" id="226186.BT_4551"/>
<dbReference type="PaxDb" id="226186-BT_4551"/>
<dbReference type="EnsemblBacteria" id="AAO79656">
    <property type="protein sequence ID" value="AAO79656"/>
    <property type="gene ID" value="BT_4551"/>
</dbReference>
<dbReference type="GeneID" id="60925725"/>
<dbReference type="KEGG" id="bth:BT_4551"/>
<dbReference type="PATRIC" id="fig|226186.12.peg.4632"/>
<dbReference type="eggNOG" id="COG0486">
    <property type="taxonomic scope" value="Bacteria"/>
</dbReference>
<dbReference type="HOGENOM" id="CLU_019624_4_1_10"/>
<dbReference type="InParanoid" id="Q89Z26"/>
<dbReference type="OrthoDB" id="9805918at2"/>
<dbReference type="Proteomes" id="UP000001414">
    <property type="component" value="Chromosome"/>
</dbReference>
<dbReference type="GO" id="GO:0005737">
    <property type="term" value="C:cytoplasm"/>
    <property type="evidence" value="ECO:0000318"/>
    <property type="project" value="GO_Central"/>
</dbReference>
<dbReference type="GO" id="GO:0005829">
    <property type="term" value="C:cytosol"/>
    <property type="evidence" value="ECO:0000318"/>
    <property type="project" value="GO_Central"/>
</dbReference>
<dbReference type="GO" id="GO:0005525">
    <property type="term" value="F:GTP binding"/>
    <property type="evidence" value="ECO:0007669"/>
    <property type="project" value="UniProtKB-UniRule"/>
</dbReference>
<dbReference type="GO" id="GO:0003924">
    <property type="term" value="F:GTPase activity"/>
    <property type="evidence" value="ECO:0007669"/>
    <property type="project" value="UniProtKB-UniRule"/>
</dbReference>
<dbReference type="GO" id="GO:0046872">
    <property type="term" value="F:metal ion binding"/>
    <property type="evidence" value="ECO:0007669"/>
    <property type="project" value="UniProtKB-KW"/>
</dbReference>
<dbReference type="GO" id="GO:0030488">
    <property type="term" value="P:tRNA methylation"/>
    <property type="evidence" value="ECO:0000318"/>
    <property type="project" value="GO_Central"/>
</dbReference>
<dbReference type="GO" id="GO:0002098">
    <property type="term" value="P:tRNA wobble uridine modification"/>
    <property type="evidence" value="ECO:0000318"/>
    <property type="project" value="GO_Central"/>
</dbReference>
<dbReference type="CDD" id="cd04164">
    <property type="entry name" value="trmE"/>
    <property type="match status" value="1"/>
</dbReference>
<dbReference type="CDD" id="cd14858">
    <property type="entry name" value="TrmE_N"/>
    <property type="match status" value="1"/>
</dbReference>
<dbReference type="FunFam" id="3.30.1360.120:FF:000003">
    <property type="entry name" value="tRNA modification GTPase MnmE"/>
    <property type="match status" value="1"/>
</dbReference>
<dbReference type="FunFam" id="3.40.50.300:FF:001376">
    <property type="entry name" value="tRNA modification GTPase MnmE"/>
    <property type="match status" value="1"/>
</dbReference>
<dbReference type="Gene3D" id="3.40.50.300">
    <property type="entry name" value="P-loop containing nucleotide triphosphate hydrolases"/>
    <property type="match status" value="1"/>
</dbReference>
<dbReference type="Gene3D" id="3.30.1360.120">
    <property type="entry name" value="Probable tRNA modification gtpase trme, domain 1"/>
    <property type="match status" value="1"/>
</dbReference>
<dbReference type="Gene3D" id="1.20.120.430">
    <property type="entry name" value="tRNA modification GTPase MnmE domain 2"/>
    <property type="match status" value="1"/>
</dbReference>
<dbReference type="HAMAP" id="MF_00379">
    <property type="entry name" value="GTPase_MnmE"/>
    <property type="match status" value="1"/>
</dbReference>
<dbReference type="InterPro" id="IPR031168">
    <property type="entry name" value="G_TrmE"/>
</dbReference>
<dbReference type="InterPro" id="IPR006073">
    <property type="entry name" value="GTP-bd"/>
</dbReference>
<dbReference type="InterPro" id="IPR018948">
    <property type="entry name" value="GTP-bd_TrmE_N"/>
</dbReference>
<dbReference type="InterPro" id="IPR004520">
    <property type="entry name" value="GTPase_MnmE"/>
</dbReference>
<dbReference type="InterPro" id="IPR027368">
    <property type="entry name" value="MnmE_dom2"/>
</dbReference>
<dbReference type="InterPro" id="IPR025867">
    <property type="entry name" value="MnmE_helical"/>
</dbReference>
<dbReference type="InterPro" id="IPR027417">
    <property type="entry name" value="P-loop_NTPase"/>
</dbReference>
<dbReference type="InterPro" id="IPR005225">
    <property type="entry name" value="Small_GTP-bd"/>
</dbReference>
<dbReference type="InterPro" id="IPR027266">
    <property type="entry name" value="TrmE/GcvT_dom1"/>
</dbReference>
<dbReference type="NCBIfam" id="TIGR00450">
    <property type="entry name" value="mnmE_trmE_thdF"/>
    <property type="match status" value="1"/>
</dbReference>
<dbReference type="NCBIfam" id="NF003661">
    <property type="entry name" value="PRK05291.1-3"/>
    <property type="match status" value="1"/>
</dbReference>
<dbReference type="NCBIfam" id="TIGR00231">
    <property type="entry name" value="small_GTP"/>
    <property type="match status" value="1"/>
</dbReference>
<dbReference type="PANTHER" id="PTHR42714">
    <property type="entry name" value="TRNA MODIFICATION GTPASE GTPBP3"/>
    <property type="match status" value="1"/>
</dbReference>
<dbReference type="PANTHER" id="PTHR42714:SF2">
    <property type="entry name" value="TRNA MODIFICATION GTPASE GTPBP3, MITOCHONDRIAL"/>
    <property type="match status" value="1"/>
</dbReference>
<dbReference type="Pfam" id="PF01926">
    <property type="entry name" value="MMR_HSR1"/>
    <property type="match status" value="1"/>
</dbReference>
<dbReference type="Pfam" id="PF12631">
    <property type="entry name" value="MnmE_helical"/>
    <property type="match status" value="1"/>
</dbReference>
<dbReference type="Pfam" id="PF10396">
    <property type="entry name" value="TrmE_N"/>
    <property type="match status" value="1"/>
</dbReference>
<dbReference type="SUPFAM" id="SSF52540">
    <property type="entry name" value="P-loop containing nucleoside triphosphate hydrolases"/>
    <property type="match status" value="1"/>
</dbReference>
<dbReference type="PROSITE" id="PS51709">
    <property type="entry name" value="G_TRME"/>
    <property type="match status" value="1"/>
</dbReference>
<gene>
    <name evidence="1" type="primary">mnmE</name>
    <name evidence="1" type="synonym">trmE</name>
    <name type="ordered locus">BT_4551</name>
</gene>
<comment type="function">
    <text evidence="1">Exhibits a very high intrinsic GTPase hydrolysis rate. Involved in the addition of a carboxymethylaminomethyl (cmnm) group at the wobble position (U34) of certain tRNAs, forming tRNA-cmnm(5)s(2)U34.</text>
</comment>
<comment type="cofactor">
    <cofactor evidence="1">
        <name>K(+)</name>
        <dbReference type="ChEBI" id="CHEBI:29103"/>
    </cofactor>
    <text evidence="1">Binds 1 potassium ion per subunit.</text>
</comment>
<comment type="subunit">
    <text evidence="1">Homodimer. Heterotetramer of two MnmE and two MnmG subunits.</text>
</comment>
<comment type="subcellular location">
    <subcellularLocation>
        <location evidence="1">Cytoplasm</location>
    </subcellularLocation>
</comment>
<comment type="similarity">
    <text evidence="1">Belongs to the TRAFAC class TrmE-Era-EngA-EngB-Septin-like GTPase superfamily. TrmE GTPase family.</text>
</comment>